<evidence type="ECO:0000255" key="1">
    <source>
        <dbReference type="HAMAP-Rule" id="MF_03004"/>
    </source>
</evidence>
<evidence type="ECO:0000255" key="2">
    <source>
        <dbReference type="PROSITE-ProRule" id="PRU01185"/>
    </source>
</evidence>
<evidence type="ECO:0000269" key="3">
    <source>
    </source>
</evidence>
<evidence type="ECO:0000269" key="4">
    <source>
    </source>
</evidence>
<evidence type="ECO:0000269" key="5">
    <source>
    </source>
</evidence>
<evidence type="ECO:0000269" key="6">
    <source>
    </source>
</evidence>
<evidence type="ECO:0000269" key="7">
    <source>
    </source>
</evidence>
<evidence type="ECO:0000269" key="8">
    <source>
    </source>
</evidence>
<evidence type="ECO:0000303" key="9">
    <source>
    </source>
</evidence>
<evidence type="ECO:0000305" key="10"/>
<evidence type="ECO:0000312" key="11">
    <source>
        <dbReference type="EMBL" id="AAG53613.1"/>
    </source>
</evidence>
<evidence type="ECO:0000312" key="12">
    <source>
        <dbReference type="EMBL" id="AEE79636.1"/>
    </source>
</evidence>
<evidence type="ECO:0000312" key="13">
    <source>
        <dbReference type="EMBL" id="CAB68135.1"/>
    </source>
</evidence>
<reference key="1">
    <citation type="journal article" date="2001" name="J. Biol. Chem.">
        <title>Arabidopsis eIF3e (INT-6) associates with both eIF3c and the COP9 signalosome subunit CSN7.</title>
        <authorList>
            <person name="Yahalom A."/>
            <person name="Kim T.-H."/>
            <person name="Winter E."/>
            <person name="Karniol B."/>
            <person name="von Arnim A.G."/>
            <person name="Chamovitz D.A."/>
        </authorList>
    </citation>
    <scope>NUCLEOTIDE SEQUENCE [MRNA]</scope>
    <scope>SUBUNIT</scope>
    <scope>INTERACTION WITH CSN7 AND TIF3C1</scope>
    <scope>SUBCELLULAR LOCATION</scope>
    <source>
        <strain>cv. Columbia</strain>
    </source>
</reference>
<reference key="2">
    <citation type="journal article" date="2001" name="J. Biol. Chem.">
        <title>Plant initiation factor 3 subunit composition resembles mammalian initiation factor 3 and has a novel subunit.</title>
        <authorList>
            <person name="Burks E.A."/>
            <person name="Bezerra P.P."/>
            <person name="Le H."/>
            <person name="Gallie D.R."/>
            <person name="Browning K.S."/>
        </authorList>
    </citation>
    <scope>NUCLEOTIDE SEQUENCE [MRNA]</scope>
</reference>
<reference key="3">
    <citation type="journal article" date="2000" name="Nature">
        <title>Sequence and analysis of chromosome 3 of the plant Arabidopsis thaliana.</title>
        <authorList>
            <person name="Salanoubat M."/>
            <person name="Lemcke K."/>
            <person name="Rieger M."/>
            <person name="Ansorge W."/>
            <person name="Unseld M."/>
            <person name="Fartmann B."/>
            <person name="Valle G."/>
            <person name="Bloecker H."/>
            <person name="Perez-Alonso M."/>
            <person name="Obermaier B."/>
            <person name="Delseny M."/>
            <person name="Boutry M."/>
            <person name="Grivell L.A."/>
            <person name="Mache R."/>
            <person name="Puigdomenech P."/>
            <person name="De Simone V."/>
            <person name="Choisne N."/>
            <person name="Artiguenave F."/>
            <person name="Robert C."/>
            <person name="Brottier P."/>
            <person name="Wincker P."/>
            <person name="Cattolico L."/>
            <person name="Weissenbach J."/>
            <person name="Saurin W."/>
            <person name="Quetier F."/>
            <person name="Schaefer M."/>
            <person name="Mueller-Auer S."/>
            <person name="Gabel C."/>
            <person name="Fuchs M."/>
            <person name="Benes V."/>
            <person name="Wurmbach E."/>
            <person name="Drzonek H."/>
            <person name="Erfle H."/>
            <person name="Jordan N."/>
            <person name="Bangert S."/>
            <person name="Wiedelmann R."/>
            <person name="Kranz H."/>
            <person name="Voss H."/>
            <person name="Holland R."/>
            <person name="Brandt P."/>
            <person name="Nyakatura G."/>
            <person name="Vezzi A."/>
            <person name="D'Angelo M."/>
            <person name="Pallavicini A."/>
            <person name="Toppo S."/>
            <person name="Simionati B."/>
            <person name="Conrad A."/>
            <person name="Hornischer K."/>
            <person name="Kauer G."/>
            <person name="Loehnert T.-H."/>
            <person name="Nordsiek G."/>
            <person name="Reichelt J."/>
            <person name="Scharfe M."/>
            <person name="Schoen O."/>
            <person name="Bargues M."/>
            <person name="Terol J."/>
            <person name="Climent J."/>
            <person name="Navarro P."/>
            <person name="Collado C."/>
            <person name="Perez-Perez A."/>
            <person name="Ottenwaelder B."/>
            <person name="Duchemin D."/>
            <person name="Cooke R."/>
            <person name="Laudie M."/>
            <person name="Berger-Llauro C."/>
            <person name="Purnelle B."/>
            <person name="Masuy D."/>
            <person name="de Haan M."/>
            <person name="Maarse A.C."/>
            <person name="Alcaraz J.-P."/>
            <person name="Cottet A."/>
            <person name="Casacuberta E."/>
            <person name="Monfort A."/>
            <person name="Argiriou A."/>
            <person name="Flores M."/>
            <person name="Liguori R."/>
            <person name="Vitale D."/>
            <person name="Mannhaupt G."/>
            <person name="Haase D."/>
            <person name="Schoof H."/>
            <person name="Rudd S."/>
            <person name="Zaccaria P."/>
            <person name="Mewes H.-W."/>
            <person name="Mayer K.F.X."/>
            <person name="Kaul S."/>
            <person name="Town C.D."/>
            <person name="Koo H.L."/>
            <person name="Tallon L.J."/>
            <person name="Jenkins J."/>
            <person name="Rooney T."/>
            <person name="Rizzo M."/>
            <person name="Walts A."/>
            <person name="Utterback T."/>
            <person name="Fujii C.Y."/>
            <person name="Shea T.P."/>
            <person name="Creasy T.H."/>
            <person name="Haas B."/>
            <person name="Maiti R."/>
            <person name="Wu D."/>
            <person name="Peterson J."/>
            <person name="Van Aken S."/>
            <person name="Pai G."/>
            <person name="Militscher J."/>
            <person name="Sellers P."/>
            <person name="Gill J.E."/>
            <person name="Feldblyum T.V."/>
            <person name="Preuss D."/>
            <person name="Lin X."/>
            <person name="Nierman W.C."/>
            <person name="Salzberg S.L."/>
            <person name="White O."/>
            <person name="Venter J.C."/>
            <person name="Fraser C.M."/>
            <person name="Kaneko T."/>
            <person name="Nakamura Y."/>
            <person name="Sato S."/>
            <person name="Kato T."/>
            <person name="Asamizu E."/>
            <person name="Sasamoto S."/>
            <person name="Kimura T."/>
            <person name="Idesawa K."/>
            <person name="Kawashima K."/>
            <person name="Kishida Y."/>
            <person name="Kiyokawa C."/>
            <person name="Kohara M."/>
            <person name="Matsumoto M."/>
            <person name="Matsuno A."/>
            <person name="Muraki A."/>
            <person name="Nakayama S."/>
            <person name="Nakazaki N."/>
            <person name="Shinpo S."/>
            <person name="Takeuchi C."/>
            <person name="Wada T."/>
            <person name="Watanabe A."/>
            <person name="Yamada M."/>
            <person name="Yasuda M."/>
            <person name="Tabata S."/>
        </authorList>
    </citation>
    <scope>NUCLEOTIDE SEQUENCE [LARGE SCALE GENOMIC DNA]</scope>
    <source>
        <strain>cv. Columbia</strain>
    </source>
</reference>
<reference key="4">
    <citation type="journal article" date="2017" name="Plant J.">
        <title>Araport11: a complete reannotation of the Arabidopsis thaliana reference genome.</title>
        <authorList>
            <person name="Cheng C.Y."/>
            <person name="Krishnakumar V."/>
            <person name="Chan A.P."/>
            <person name="Thibaud-Nissen F."/>
            <person name="Schobel S."/>
            <person name="Town C.D."/>
        </authorList>
    </citation>
    <scope>GENOME REANNOTATION</scope>
    <source>
        <strain>cv. Columbia</strain>
    </source>
</reference>
<reference key="5">
    <citation type="journal article" date="2003" name="Science">
        <title>Empirical analysis of transcriptional activity in the Arabidopsis genome.</title>
        <authorList>
            <person name="Yamada K."/>
            <person name="Lim J."/>
            <person name="Dale J.M."/>
            <person name="Chen H."/>
            <person name="Shinn P."/>
            <person name="Palm C.J."/>
            <person name="Southwick A.M."/>
            <person name="Wu H.C."/>
            <person name="Kim C.J."/>
            <person name="Nguyen M."/>
            <person name="Pham P.K."/>
            <person name="Cheuk R.F."/>
            <person name="Karlin-Newmann G."/>
            <person name="Liu S.X."/>
            <person name="Lam B."/>
            <person name="Sakano H."/>
            <person name="Wu T."/>
            <person name="Yu G."/>
            <person name="Miranda M."/>
            <person name="Quach H.L."/>
            <person name="Tripp M."/>
            <person name="Chang C.H."/>
            <person name="Lee J.M."/>
            <person name="Toriumi M.J."/>
            <person name="Chan M.M."/>
            <person name="Tang C.C."/>
            <person name="Onodera C.S."/>
            <person name="Deng J.M."/>
            <person name="Akiyama K."/>
            <person name="Ansari Y."/>
            <person name="Arakawa T."/>
            <person name="Banh J."/>
            <person name="Banno F."/>
            <person name="Bowser L."/>
            <person name="Brooks S.Y."/>
            <person name="Carninci P."/>
            <person name="Chao Q."/>
            <person name="Choy N."/>
            <person name="Enju A."/>
            <person name="Goldsmith A.D."/>
            <person name="Gurjal M."/>
            <person name="Hansen N.F."/>
            <person name="Hayashizaki Y."/>
            <person name="Johnson-Hopson C."/>
            <person name="Hsuan V.W."/>
            <person name="Iida K."/>
            <person name="Karnes M."/>
            <person name="Khan S."/>
            <person name="Koesema E."/>
            <person name="Ishida J."/>
            <person name="Jiang P.X."/>
            <person name="Jones T."/>
            <person name="Kawai J."/>
            <person name="Kamiya A."/>
            <person name="Meyers C."/>
            <person name="Nakajima M."/>
            <person name="Narusaka M."/>
            <person name="Seki M."/>
            <person name="Sakurai T."/>
            <person name="Satou M."/>
            <person name="Tamse R."/>
            <person name="Vaysberg M."/>
            <person name="Wallender E.K."/>
            <person name="Wong C."/>
            <person name="Yamamura Y."/>
            <person name="Yuan S."/>
            <person name="Shinozaki K."/>
            <person name="Davis R.W."/>
            <person name="Theologis A."/>
            <person name="Ecker J.R."/>
        </authorList>
    </citation>
    <scope>NUCLEOTIDE SEQUENCE [LARGE SCALE MRNA]</scope>
    <source>
        <strain>cv. Columbia</strain>
    </source>
</reference>
<reference key="6">
    <citation type="journal article" date="2004" name="Plant Cell">
        <title>Translational regulation via 5' mRNA leader sequences revealed by mutational analysis of the Arabidopsis translation initiation factor subunit eIF3h.</title>
        <authorList>
            <person name="Kim T.-H."/>
            <person name="Kim B.-H."/>
            <person name="Yahalom A."/>
            <person name="Chamovitz D.A."/>
            <person name="von Arnim A.G."/>
        </authorList>
    </citation>
    <scope>INTERACTION WITH TIF3H1</scope>
</reference>
<reference key="7">
    <citation type="journal article" date="2006" name="Cell Biochem. Biophys.">
        <title>Identification and characterization of a proteolysis-resistant fragment containing the PCI domain in the Arabidopsis thaliana INT6/eIF3e translation factor.</title>
        <authorList>
            <person name="Murai M.J."/>
            <person name="Carneiro F.R.G."/>
            <person name="Gozzo F.C."/>
            <person name="Ierardi D.F."/>
            <person name="Pertinhez T.A."/>
            <person name="Zanchin N.I.T."/>
        </authorList>
    </citation>
    <scope>PROTEASE-RESISTANCE</scope>
</reference>
<reference key="8">
    <citation type="journal article" date="2008" name="Plant J.">
        <title>Arabidopsis eIF3e is regulated by the COP9 signalosome and has an impact on development and protein translation.</title>
        <authorList>
            <person name="Yahalom A."/>
            <person name="Kim T.-H."/>
            <person name="Roy B."/>
            <person name="Singer R."/>
            <person name="von Arnim A.G."/>
            <person name="Chamovitz D.A."/>
        </authorList>
    </citation>
    <scope>FUNCTION</scope>
    <scope>DISRUPTION PHENOTYPE</scope>
    <scope>INDUCTION</scope>
</reference>
<reference key="9">
    <citation type="journal article" date="2008" name="Plant Signal. Behav.">
        <title>Arabidopsis eIF3e interacts with subunits of the ribosome, Cop9 signalosome and proteasome.</title>
        <authorList>
            <person name="Paz-Aviram T."/>
            <person name="Yahalom A."/>
            <person name="Chamovitz D.A."/>
        </authorList>
    </citation>
    <scope>INTERACTION WITH AT1G27930; AT4G30620; CSN1; CSN4; CSN6A; CSN6B; CSN7; CSN8; RPN12A; RPS9B AND RPS9C</scope>
    <scope>SUBUNIT</scope>
</reference>
<reference key="10">
    <citation type="journal article" date="2010" name="Plant J.">
        <title>The Arabidopsis eukaryotic translation initiation factor 3, subunit F (AteIF3f), is required for pollen germination and embryogenesis.</title>
        <authorList>
            <person name="Xia C."/>
            <person name="Wang Y.-J."/>
            <person name="Li W.-Q."/>
            <person name="Chen Y.-R."/>
            <person name="Deng Y."/>
            <person name="Zhang X.-Q."/>
            <person name="Chen L.-Q."/>
            <person name="Ye D."/>
        </authorList>
    </citation>
    <scope>FUNCTION</scope>
    <scope>DISRUPTION PHENOTYPE</scope>
    <scope>INTERACTION WITH TIF3F1</scope>
</reference>
<comment type="function">
    <text evidence="1 6 8">Component of the eukaryotic translation initiation factor 3 (eIF-3) complex, which is involved in protein synthesis of a specialized repertoire of mRNAs and, together with other initiation factors, stimulates binding of mRNA and methionyl-tRNAi to the 40S ribosome. The eIF-3 complex specifically targets and initiates translation of a subset of mRNAs involved in cell proliferation (Potential). Negatively regulates translation during flower development (PubMed:18067529, PubMed:20444226).</text>
</comment>
<comment type="subunit">
    <text evidence="1 3 4 7 8">Component of the eukaryotic translation initiation factor 3 (eIF-3) complex (Potential). Binds to the translation initiation factors TIF3F1 and TIF3H1 (PubMed:15548739, PubMed:20444226). Associates with the CSN (COP9 signalosome) complex. Interacts directly with CSN1, CSN4, CSN6A, CSN6B, CSN7, CSN8 and TIF3C1 (PubMed:11029466, PubMed:19704582). Binds to 40S small ribosomal subunit S9 (RPS9B and RPS9C) via its N-terminal part. Interacts with the 26S proteasome subunit RPN12a via its C-terminal part. Also binds with At1g27930 and At4g30620 (PubMed:19704582).</text>
</comment>
<comment type="interaction">
    <interactant intactId="EBI-1635572">
        <id>Q9C5Z3</id>
    </interactant>
    <interactant intactId="EBI-617095">
        <id>Q9LEZ3</id>
        <label>BIM1</label>
    </interactant>
    <organismsDiffer>false</organismsDiffer>
    <experiments>3</experiments>
</comment>
<comment type="interaction">
    <interactant intactId="EBI-1635572">
        <id>Q9C5Z3</id>
    </interactant>
    <interactant intactId="EBI-531152">
        <id>Q94JU3</id>
        <label>CSN7</label>
    </interactant>
    <organismsDiffer>false</organismsDiffer>
    <experiments>6</experiments>
</comment>
<comment type="interaction">
    <interactant intactId="EBI-1635572">
        <id>Q9C5Z3</id>
    </interactant>
    <interactant intactId="EBI-1635551">
        <id>O49160</id>
        <label>TIF3C1</label>
    </interactant>
    <organismsDiffer>false</organismsDiffer>
    <experiments>3</experiments>
</comment>
<comment type="interaction">
    <interactant intactId="EBI-1635572">
        <id>Q9C5Z3</id>
    </interactant>
    <interactant intactId="EBI-4426557">
        <id>Q84MB2</id>
        <label>TIFY8</label>
    </interactant>
    <organismsDiffer>false</organismsDiffer>
    <experiments>3</experiments>
</comment>
<comment type="subcellular location">
    <subcellularLocation>
        <location evidence="1 3">Cytoplasm</location>
    </subcellularLocation>
    <subcellularLocation>
        <location evidence="3">Nucleus</location>
    </subcellularLocation>
</comment>
<comment type="induction">
    <text evidence="6">Targeted by the COP9 signalosome to proteasome-dependent degradation.</text>
</comment>
<comment type="disruption phenotype">
    <text evidence="6 8">Several floral development defects, including delayed flowering, reduced sepaloid petals and short stamens. Male gametophytic lethal.</text>
</comment>
<comment type="miscellaneous">
    <text evidence="5">The PCI domain is protease-resistant.</text>
</comment>
<comment type="similarity">
    <text evidence="1">Belongs to the eIF-3 subunit E family.</text>
</comment>
<comment type="sequence caution" evidence="10">
    <conflict type="erroneous gene model prediction">
        <sequence resource="EMBL-CDS" id="CAB68135"/>
    </conflict>
</comment>
<protein>
    <recommendedName>
        <fullName evidence="1 9">Eukaryotic translation initiation factor 3 subunit E</fullName>
        <shortName evidence="9">AtEIF3E-1</shortName>
        <shortName evidence="1 9">eIF3e</shortName>
        <shortName evidence="9">p48</shortName>
    </recommendedName>
    <alternativeName>
        <fullName evidence="1">Eukaryotic translation initiation factor 3 subunit 6</fullName>
        <shortName evidence="9">AtINT6</shortName>
        <shortName evidence="9">INT-6</shortName>
    </alternativeName>
</protein>
<sequence>MEESKQNYDLTPLIAPNLDRHLVFPIFEFLQERQLYPDEQILKSKIQLLNQTNMVDYAMDIHKSLYHTEDAPQEMVERRTEVVARLKSLEEAAAPLVSFLLNPNAVQELRADKQYNLQMLKERYQIGPDQIEALYQYAKFQFECGNYSGAADYLYQYRTLCSNLERSLSALWGKLASEILMQNWDIALEELNRLKEIIDSKSFSSPLNQVQNRIWLMHWGLYIFFNHDNGRTQIIDLFNQDKYLNAIQTSAPHLLRYLATAFIVNKRRRPQLKEFIKVIQQEHYSYKDPIIEFLACVFVNYDFDGAQKKMKECEEVIVNDPFLGKRVEDGNFSTVPLRDEFLENARLFVFETYCKIHQRIDMGVLAEKLNLNYEEAERWIVNLIRTSKLDAKIDSESGTVIMEPTQPNVHEQLINHTKGLSGRTYKLVNQLLEHTQAQATR</sequence>
<name>EIF3E_ARATH</name>
<gene>
    <name evidence="9" type="primary">TIF3E1</name>
    <name evidence="9" type="synonym">INT6</name>
    <name evidence="12" type="ordered locus">At3g57290</name>
    <name evidence="13" type="ORF">F28O9.140</name>
</gene>
<accession>Q9C5Z3</accession>
<accession>Q9M2L8</accession>
<accession>Q9M4T7</accession>
<keyword id="KW-0963">Cytoplasm</keyword>
<keyword id="KW-0217">Developmental protein</keyword>
<keyword id="KW-0396">Initiation factor</keyword>
<keyword id="KW-0539">Nucleus</keyword>
<keyword id="KW-0648">Protein biosynthesis</keyword>
<keyword id="KW-1185">Reference proteome</keyword>
<keyword id="KW-0678">Repressor</keyword>
<keyword id="KW-0810">Translation regulation</keyword>
<organism evidence="11">
    <name type="scientific">Arabidopsis thaliana</name>
    <name type="common">Mouse-ear cress</name>
    <dbReference type="NCBI Taxonomy" id="3702"/>
    <lineage>
        <taxon>Eukaryota</taxon>
        <taxon>Viridiplantae</taxon>
        <taxon>Streptophyta</taxon>
        <taxon>Embryophyta</taxon>
        <taxon>Tracheophyta</taxon>
        <taxon>Spermatophyta</taxon>
        <taxon>Magnoliopsida</taxon>
        <taxon>eudicotyledons</taxon>
        <taxon>Gunneridae</taxon>
        <taxon>Pentapetalae</taxon>
        <taxon>rosids</taxon>
        <taxon>malvids</taxon>
        <taxon>Brassicales</taxon>
        <taxon>Brassicaceae</taxon>
        <taxon>Camelineae</taxon>
        <taxon>Arabidopsis</taxon>
    </lineage>
</organism>
<dbReference type="EMBL" id="AF255679">
    <property type="protein sequence ID" value="AAF67757.1"/>
    <property type="molecule type" value="mRNA"/>
</dbReference>
<dbReference type="EMBL" id="AF285832">
    <property type="protein sequence ID" value="AAG53613.1"/>
    <property type="molecule type" value="mRNA"/>
</dbReference>
<dbReference type="EMBL" id="AL137080">
    <property type="protein sequence ID" value="CAB68135.1"/>
    <property type="status" value="ALT_SEQ"/>
    <property type="molecule type" value="Genomic_DNA"/>
</dbReference>
<dbReference type="EMBL" id="CP002686">
    <property type="protein sequence ID" value="AEE79636.1"/>
    <property type="molecule type" value="Genomic_DNA"/>
</dbReference>
<dbReference type="EMBL" id="AY039913">
    <property type="protein sequence ID" value="AAK64017.1"/>
    <property type="molecule type" value="mRNA"/>
</dbReference>
<dbReference type="EMBL" id="AY079357">
    <property type="protein sequence ID" value="AAL85088.1"/>
    <property type="molecule type" value="mRNA"/>
</dbReference>
<dbReference type="PIR" id="T45807">
    <property type="entry name" value="T45807"/>
</dbReference>
<dbReference type="SMR" id="Q9C5Z3"/>
<dbReference type="FunCoup" id="Q9C5Z3">
    <property type="interactions" value="4861"/>
</dbReference>
<dbReference type="IntAct" id="Q9C5Z3">
    <property type="interactions" value="4"/>
</dbReference>
<dbReference type="STRING" id="3702.Q9C5Z3"/>
<dbReference type="iPTMnet" id="Q9C5Z3"/>
<dbReference type="PaxDb" id="3702-AT3G57290.1"/>
<dbReference type="ProteomicsDB" id="222285"/>
<dbReference type="EnsemblPlants" id="AT3G57290.1">
    <property type="protein sequence ID" value="AT3G57290.1"/>
    <property type="gene ID" value="AT3G57290"/>
</dbReference>
<dbReference type="GeneID" id="824896"/>
<dbReference type="Gramene" id="AT3G57290.1">
    <property type="protein sequence ID" value="AT3G57290.1"/>
    <property type="gene ID" value="AT3G57290"/>
</dbReference>
<dbReference type="KEGG" id="ath:AT3G57290"/>
<dbReference type="Araport" id="AT3G57290"/>
<dbReference type="TAIR" id="AT3G57290">
    <property type="gene designation" value="EIF3E"/>
</dbReference>
<dbReference type="eggNOG" id="KOG2758">
    <property type="taxonomic scope" value="Eukaryota"/>
</dbReference>
<dbReference type="HOGENOM" id="CLU_031132_0_0_1"/>
<dbReference type="InParanoid" id="Q9C5Z3"/>
<dbReference type="OMA" id="NCPWILR"/>
<dbReference type="OrthoDB" id="417252at2759"/>
<dbReference type="PhylomeDB" id="Q9C5Z3"/>
<dbReference type="CD-CODE" id="4299E36E">
    <property type="entry name" value="Nucleolus"/>
</dbReference>
<dbReference type="PRO" id="PR:Q9C5Z3"/>
<dbReference type="Proteomes" id="UP000006548">
    <property type="component" value="Chromosome 3"/>
</dbReference>
<dbReference type="ExpressionAtlas" id="Q9C5Z3">
    <property type="expression patterns" value="baseline and differential"/>
</dbReference>
<dbReference type="GO" id="GO:0008180">
    <property type="term" value="C:COP9 signalosome"/>
    <property type="evidence" value="ECO:0000353"/>
    <property type="project" value="TAIR"/>
</dbReference>
<dbReference type="GO" id="GO:0005737">
    <property type="term" value="C:cytoplasm"/>
    <property type="evidence" value="ECO:0000314"/>
    <property type="project" value="TAIR"/>
</dbReference>
<dbReference type="GO" id="GO:0005829">
    <property type="term" value="C:cytosol"/>
    <property type="evidence" value="ECO:0007005"/>
    <property type="project" value="TAIR"/>
</dbReference>
<dbReference type="GO" id="GO:0031597">
    <property type="term" value="C:cytosolic proteasome complex"/>
    <property type="evidence" value="ECO:0000314"/>
    <property type="project" value="UniProtKB"/>
</dbReference>
<dbReference type="GO" id="GO:0016282">
    <property type="term" value="C:eukaryotic 43S preinitiation complex"/>
    <property type="evidence" value="ECO:0007669"/>
    <property type="project" value="UniProtKB-UniRule"/>
</dbReference>
<dbReference type="GO" id="GO:0033290">
    <property type="term" value="C:eukaryotic 48S preinitiation complex"/>
    <property type="evidence" value="ECO:0007669"/>
    <property type="project" value="UniProtKB-UniRule"/>
</dbReference>
<dbReference type="GO" id="GO:0005852">
    <property type="term" value="C:eukaryotic translation initiation factor 3 complex"/>
    <property type="evidence" value="ECO:0000353"/>
    <property type="project" value="TAIR"/>
</dbReference>
<dbReference type="GO" id="GO:0071540">
    <property type="term" value="C:eukaryotic translation initiation factor 3 complex, eIF3e"/>
    <property type="evidence" value="ECO:0007669"/>
    <property type="project" value="UniProtKB-UniRule"/>
</dbReference>
<dbReference type="GO" id="GO:0005634">
    <property type="term" value="C:nucleus"/>
    <property type="evidence" value="ECO:0000314"/>
    <property type="project" value="TAIR"/>
</dbReference>
<dbReference type="GO" id="GO:0003729">
    <property type="term" value="F:mRNA binding"/>
    <property type="evidence" value="ECO:0007005"/>
    <property type="project" value="TAIR"/>
</dbReference>
<dbReference type="GO" id="GO:0003743">
    <property type="term" value="F:translation initiation factor activity"/>
    <property type="evidence" value="ECO:0007669"/>
    <property type="project" value="UniProtKB-UniRule"/>
</dbReference>
<dbReference type="GO" id="GO:0030371">
    <property type="term" value="F:translation repressor activity"/>
    <property type="evidence" value="ECO:0000314"/>
    <property type="project" value="UniProtKB"/>
</dbReference>
<dbReference type="GO" id="GO:0006352">
    <property type="term" value="P:DNA-templated transcription initiation"/>
    <property type="evidence" value="ECO:0000304"/>
    <property type="project" value="TAIR"/>
</dbReference>
<dbReference type="GO" id="GO:0009908">
    <property type="term" value="P:flower development"/>
    <property type="evidence" value="ECO:0000315"/>
    <property type="project" value="TAIR"/>
</dbReference>
<dbReference type="GO" id="GO:0001732">
    <property type="term" value="P:formation of cytoplasmic translation initiation complex"/>
    <property type="evidence" value="ECO:0007669"/>
    <property type="project" value="UniProtKB-UniRule"/>
</dbReference>
<dbReference type="GO" id="GO:0009640">
    <property type="term" value="P:photomorphogenesis"/>
    <property type="evidence" value="ECO:0000315"/>
    <property type="project" value="TAIR"/>
</dbReference>
<dbReference type="GO" id="GO:0006412">
    <property type="term" value="P:translation"/>
    <property type="evidence" value="ECO:0000315"/>
    <property type="project" value="TAIR"/>
</dbReference>
<dbReference type="CDD" id="cd21378">
    <property type="entry name" value="eIF3E"/>
    <property type="match status" value="1"/>
</dbReference>
<dbReference type="FunFam" id="1.25.40.570:FF:000020">
    <property type="entry name" value="Eukaryotic translation initiation factor 3 subunit E"/>
    <property type="match status" value="1"/>
</dbReference>
<dbReference type="Gene3D" id="1.25.40.570">
    <property type="match status" value="1"/>
</dbReference>
<dbReference type="HAMAP" id="MF_03004">
    <property type="entry name" value="eIF3e"/>
    <property type="match status" value="1"/>
</dbReference>
<dbReference type="InterPro" id="IPR016650">
    <property type="entry name" value="eIF3e"/>
</dbReference>
<dbReference type="InterPro" id="IPR019010">
    <property type="entry name" value="eIF3e_N"/>
</dbReference>
<dbReference type="InterPro" id="IPR000717">
    <property type="entry name" value="PCI_dom"/>
</dbReference>
<dbReference type="InterPro" id="IPR036390">
    <property type="entry name" value="WH_DNA-bd_sf"/>
</dbReference>
<dbReference type="PANTHER" id="PTHR10317">
    <property type="entry name" value="EUKARYOTIC TRANSLATION INITIATION FACTOR 3 SUBUNIT E"/>
    <property type="match status" value="1"/>
</dbReference>
<dbReference type="Pfam" id="PF09440">
    <property type="entry name" value="eIF3_N"/>
    <property type="match status" value="1"/>
</dbReference>
<dbReference type="Pfam" id="PF01399">
    <property type="entry name" value="PCI"/>
    <property type="match status" value="1"/>
</dbReference>
<dbReference type="PIRSF" id="PIRSF016255">
    <property type="entry name" value="eIF3e_su6"/>
    <property type="match status" value="1"/>
</dbReference>
<dbReference type="SMART" id="SM01186">
    <property type="entry name" value="eIF3_N"/>
    <property type="match status" value="1"/>
</dbReference>
<dbReference type="SMART" id="SM00088">
    <property type="entry name" value="PINT"/>
    <property type="match status" value="1"/>
</dbReference>
<dbReference type="SUPFAM" id="SSF46785">
    <property type="entry name" value="Winged helix' DNA-binding domain"/>
    <property type="match status" value="1"/>
</dbReference>
<dbReference type="PROSITE" id="PS50250">
    <property type="entry name" value="PCI"/>
    <property type="match status" value="1"/>
</dbReference>
<proteinExistence type="evidence at protein level"/>
<feature type="chain" id="PRO_0000434569" description="Eukaryotic translation initiation factor 3 subunit E">
    <location>
        <begin position="1"/>
        <end position="441"/>
    </location>
</feature>
<feature type="domain" description="PCI" evidence="2">
    <location>
        <begin position="223"/>
        <end position="407"/>
    </location>
</feature>
<feature type="sequence conflict" description="In Ref. 1; AAF67757." evidence="10" ref="1">
    <original>E</original>
    <variation>D</variation>
    <location>
        <position position="274"/>
    </location>
</feature>
<feature type="sequence conflict" description="In Ref. 1; AAF67757." evidence="10" ref="1">
    <original>L</original>
    <variation>F</variation>
    <location>
        <position position="342"/>
    </location>
</feature>
<feature type="sequence conflict" description="In Ref. 1; AAF67757." evidence="10" ref="1">
    <original>Y</original>
    <variation>F</variation>
    <location>
        <position position="353"/>
    </location>
</feature>
<feature type="sequence conflict" description="In Ref. 1; AAF67757." evidence="10" ref="1">
    <original>A</original>
    <variation>R</variation>
    <location>
        <position position="366"/>
    </location>
</feature>
<feature type="sequence conflict" description="In Ref. 1; AAF67757." evidence="10" ref="1">
    <original>E</original>
    <variation>V</variation>
    <location>
        <position position="403"/>
    </location>
</feature>